<organism>
    <name type="scientific">Escherichia coli (strain UTI89 / UPEC)</name>
    <dbReference type="NCBI Taxonomy" id="364106"/>
    <lineage>
        <taxon>Bacteria</taxon>
        <taxon>Pseudomonadati</taxon>
        <taxon>Pseudomonadota</taxon>
        <taxon>Gammaproteobacteria</taxon>
        <taxon>Enterobacterales</taxon>
        <taxon>Enterobacteriaceae</taxon>
        <taxon>Escherichia</taxon>
    </lineage>
</organism>
<protein>
    <recommendedName>
        <fullName evidence="1">Glutamine--tRNA ligase</fullName>
        <ecNumber evidence="1">6.1.1.18</ecNumber>
    </recommendedName>
    <alternativeName>
        <fullName evidence="1">Glutaminyl-tRNA synthetase</fullName>
        <shortName evidence="1">GlnRS</shortName>
    </alternativeName>
</protein>
<gene>
    <name evidence="1" type="primary">glnS</name>
    <name type="ordered locus">UTI89_C0684</name>
</gene>
<feature type="chain" id="PRO_1000016295" description="Glutamine--tRNA ligase">
    <location>
        <begin position="1"/>
        <end position="554"/>
    </location>
</feature>
<feature type="region of interest" description="Interaction with tRNA" evidence="1">
    <location>
        <begin position="317"/>
        <end position="324"/>
    </location>
</feature>
<feature type="short sequence motif" description="'HIGH' region" evidence="1">
    <location>
        <begin position="34"/>
        <end position="44"/>
    </location>
</feature>
<feature type="short sequence motif" description="'KMSKS' region" evidence="1">
    <location>
        <begin position="268"/>
        <end position="272"/>
    </location>
</feature>
<feature type="binding site" evidence="1">
    <location>
        <begin position="35"/>
        <end position="37"/>
    </location>
    <ligand>
        <name>ATP</name>
        <dbReference type="ChEBI" id="CHEBI:30616"/>
    </ligand>
</feature>
<feature type="binding site" evidence="1">
    <location>
        <begin position="41"/>
        <end position="47"/>
    </location>
    <ligand>
        <name>ATP</name>
        <dbReference type="ChEBI" id="CHEBI:30616"/>
    </ligand>
</feature>
<feature type="binding site" evidence="1">
    <location>
        <position position="67"/>
    </location>
    <ligand>
        <name>L-glutamine</name>
        <dbReference type="ChEBI" id="CHEBI:58359"/>
    </ligand>
</feature>
<feature type="binding site" evidence="1">
    <location>
        <position position="212"/>
    </location>
    <ligand>
        <name>L-glutamine</name>
        <dbReference type="ChEBI" id="CHEBI:58359"/>
    </ligand>
</feature>
<feature type="binding site" evidence="1">
    <location>
        <position position="231"/>
    </location>
    <ligand>
        <name>ATP</name>
        <dbReference type="ChEBI" id="CHEBI:30616"/>
    </ligand>
</feature>
<feature type="binding site" evidence="1">
    <location>
        <begin position="261"/>
        <end position="262"/>
    </location>
    <ligand>
        <name>ATP</name>
        <dbReference type="ChEBI" id="CHEBI:30616"/>
    </ligand>
</feature>
<feature type="binding site" evidence="1">
    <location>
        <begin position="269"/>
        <end position="271"/>
    </location>
    <ligand>
        <name>ATP</name>
        <dbReference type="ChEBI" id="CHEBI:30616"/>
    </ligand>
</feature>
<sequence>MSEAEARPTNFIRQIIDEDLASGKHTTVHTRFPPEPNGYLHIGHAKSICLNFGIAQDYKGQCNLRFDDTNPVKEDIEYVDSIKNDVEWLGFHWSGNVRYSSDYFDQLHAYAIELINKGLAYVDELTPEQIREYRGTLTQPGKNSPYRDRSVEENLALFEKMRTGGFEEGKACLRAKIDMASPFIVMRDPVLYRIKFAEHHQTGNKWCIYPMYDFTHCISDALEGITHSLCTLEFQDNRRLYDWVLDNITIPVHPRQYEFSRLNLEYTVMSKRKLNLLVTDKHVEGWDDPRMPTISGLRRRGYTAASIREFCKRIGVTKQDNTIEMASLESCIREDLNENAPRAMAVIDPVKLVIENYQGEGEMVTMPNHPNKPEMGSRQVPFSGEIWIDRADFREEANKQYKRLVLGKEVRLRNAYVIKAERVEKDAEGNITTIFCTYDADTLSKDPADGRKVKGVIHWVSAAHALPVEIRLYDRLFSVPNPGAADDFLSVINPESLVIKQGFAEPSLKDAVAGKAFQFEREGYFCLDSRHSTAEKPVFNRTVGLRDTWAKVGE</sequence>
<dbReference type="EC" id="6.1.1.18" evidence="1"/>
<dbReference type="EMBL" id="CP000243">
    <property type="protein sequence ID" value="ABE06177.1"/>
    <property type="molecule type" value="Genomic_DNA"/>
</dbReference>
<dbReference type="RefSeq" id="WP_001287134.1">
    <property type="nucleotide sequence ID" value="NZ_CP064825.1"/>
</dbReference>
<dbReference type="SMR" id="Q1REN7"/>
<dbReference type="KEGG" id="eci:UTI89_C0684"/>
<dbReference type="HOGENOM" id="CLU_001882_2_3_6"/>
<dbReference type="Proteomes" id="UP000001952">
    <property type="component" value="Chromosome"/>
</dbReference>
<dbReference type="GO" id="GO:0005829">
    <property type="term" value="C:cytosol"/>
    <property type="evidence" value="ECO:0007669"/>
    <property type="project" value="TreeGrafter"/>
</dbReference>
<dbReference type="GO" id="GO:0005524">
    <property type="term" value="F:ATP binding"/>
    <property type="evidence" value="ECO:0007669"/>
    <property type="project" value="UniProtKB-UniRule"/>
</dbReference>
<dbReference type="GO" id="GO:0004819">
    <property type="term" value="F:glutamine-tRNA ligase activity"/>
    <property type="evidence" value="ECO:0007669"/>
    <property type="project" value="UniProtKB-UniRule"/>
</dbReference>
<dbReference type="GO" id="GO:0006425">
    <property type="term" value="P:glutaminyl-tRNA aminoacylation"/>
    <property type="evidence" value="ECO:0007669"/>
    <property type="project" value="InterPro"/>
</dbReference>
<dbReference type="GO" id="GO:0006424">
    <property type="term" value="P:glutamyl-tRNA aminoacylation"/>
    <property type="evidence" value="ECO:0007669"/>
    <property type="project" value="UniProtKB-UniRule"/>
</dbReference>
<dbReference type="CDD" id="cd00807">
    <property type="entry name" value="GlnRS_core"/>
    <property type="match status" value="1"/>
</dbReference>
<dbReference type="FunFam" id="1.10.1160.10:FF:000001">
    <property type="entry name" value="Glutamine--tRNA ligase"/>
    <property type="match status" value="1"/>
</dbReference>
<dbReference type="FunFam" id="2.40.240.10:FF:000001">
    <property type="entry name" value="Glutamine--tRNA ligase"/>
    <property type="match status" value="1"/>
</dbReference>
<dbReference type="FunFam" id="2.40.240.10:FF:000003">
    <property type="entry name" value="Glutamine--tRNA ligase"/>
    <property type="match status" value="1"/>
</dbReference>
<dbReference type="FunFam" id="3.90.800.10:FF:000001">
    <property type="entry name" value="Glutamine--tRNA ligase"/>
    <property type="match status" value="1"/>
</dbReference>
<dbReference type="FunFam" id="3.40.50.620:FF:000037">
    <property type="entry name" value="Glutamine--tRNA ligase cytoplasmic"/>
    <property type="match status" value="1"/>
</dbReference>
<dbReference type="Gene3D" id="1.10.1160.10">
    <property type="entry name" value="Glutamyl-trna Synthetase, Domain 2"/>
    <property type="match status" value="1"/>
</dbReference>
<dbReference type="Gene3D" id="3.90.800.10">
    <property type="entry name" value="Glutamyl-tRNA Synthetase, Domain 3"/>
    <property type="match status" value="1"/>
</dbReference>
<dbReference type="Gene3D" id="3.40.50.620">
    <property type="entry name" value="HUPs"/>
    <property type="match status" value="1"/>
</dbReference>
<dbReference type="Gene3D" id="2.40.240.10">
    <property type="entry name" value="Ribosomal Protein L25, Chain P"/>
    <property type="match status" value="2"/>
</dbReference>
<dbReference type="HAMAP" id="MF_00126">
    <property type="entry name" value="Gln_tRNA_synth"/>
    <property type="match status" value="1"/>
</dbReference>
<dbReference type="InterPro" id="IPR001412">
    <property type="entry name" value="aa-tRNA-synth_I_CS"/>
</dbReference>
<dbReference type="InterPro" id="IPR004514">
    <property type="entry name" value="Gln-tRNA-synth"/>
</dbReference>
<dbReference type="InterPro" id="IPR050132">
    <property type="entry name" value="Gln/Glu-tRNA_Ligase"/>
</dbReference>
<dbReference type="InterPro" id="IPR022861">
    <property type="entry name" value="Gln_tRNA_ligase_bac"/>
</dbReference>
<dbReference type="InterPro" id="IPR000924">
    <property type="entry name" value="Glu/Gln-tRNA-synth"/>
</dbReference>
<dbReference type="InterPro" id="IPR020058">
    <property type="entry name" value="Glu/Gln-tRNA-synth_Ib_cat-dom"/>
</dbReference>
<dbReference type="InterPro" id="IPR020059">
    <property type="entry name" value="Glu/Gln-tRNA-synth_Ib_codon-bd"/>
</dbReference>
<dbReference type="InterPro" id="IPR020061">
    <property type="entry name" value="Glu_tRNA_lig_a-bdl"/>
</dbReference>
<dbReference type="InterPro" id="IPR020056">
    <property type="entry name" value="Rbsml_bL25/Gln-tRNA_synth_N"/>
</dbReference>
<dbReference type="InterPro" id="IPR011035">
    <property type="entry name" value="Ribosomal_bL25/Gln-tRNA_synth"/>
</dbReference>
<dbReference type="InterPro" id="IPR014729">
    <property type="entry name" value="Rossmann-like_a/b/a_fold"/>
</dbReference>
<dbReference type="InterPro" id="IPR049437">
    <property type="entry name" value="tRNA-synt_1c_C2"/>
</dbReference>
<dbReference type="NCBIfam" id="TIGR00440">
    <property type="entry name" value="glnS"/>
    <property type="match status" value="1"/>
</dbReference>
<dbReference type="NCBIfam" id="NF011291">
    <property type="entry name" value="PRK14703.1"/>
    <property type="match status" value="1"/>
</dbReference>
<dbReference type="PANTHER" id="PTHR43097:SF5">
    <property type="entry name" value="GLUTAMATE--TRNA LIGASE"/>
    <property type="match status" value="1"/>
</dbReference>
<dbReference type="PANTHER" id="PTHR43097">
    <property type="entry name" value="GLUTAMINE-TRNA LIGASE"/>
    <property type="match status" value="1"/>
</dbReference>
<dbReference type="Pfam" id="PF00749">
    <property type="entry name" value="tRNA-synt_1c"/>
    <property type="match status" value="1"/>
</dbReference>
<dbReference type="Pfam" id="PF03950">
    <property type="entry name" value="tRNA-synt_1c_C"/>
    <property type="match status" value="1"/>
</dbReference>
<dbReference type="Pfam" id="PF20974">
    <property type="entry name" value="tRNA-synt_1c_C2"/>
    <property type="match status" value="1"/>
</dbReference>
<dbReference type="PRINTS" id="PR00987">
    <property type="entry name" value="TRNASYNTHGLU"/>
</dbReference>
<dbReference type="SUPFAM" id="SSF52374">
    <property type="entry name" value="Nucleotidylyl transferase"/>
    <property type="match status" value="1"/>
</dbReference>
<dbReference type="SUPFAM" id="SSF50715">
    <property type="entry name" value="Ribosomal protein L25-like"/>
    <property type="match status" value="1"/>
</dbReference>
<dbReference type="PROSITE" id="PS00178">
    <property type="entry name" value="AA_TRNA_LIGASE_I"/>
    <property type="match status" value="1"/>
</dbReference>
<comment type="catalytic activity">
    <reaction evidence="1">
        <text>tRNA(Gln) + L-glutamine + ATP = L-glutaminyl-tRNA(Gln) + AMP + diphosphate</text>
        <dbReference type="Rhea" id="RHEA:20121"/>
        <dbReference type="Rhea" id="RHEA-COMP:9662"/>
        <dbReference type="Rhea" id="RHEA-COMP:9681"/>
        <dbReference type="ChEBI" id="CHEBI:30616"/>
        <dbReference type="ChEBI" id="CHEBI:33019"/>
        <dbReference type="ChEBI" id="CHEBI:58359"/>
        <dbReference type="ChEBI" id="CHEBI:78442"/>
        <dbReference type="ChEBI" id="CHEBI:78521"/>
        <dbReference type="ChEBI" id="CHEBI:456215"/>
        <dbReference type="EC" id="6.1.1.18"/>
    </reaction>
</comment>
<comment type="subunit">
    <text evidence="1">Monomer.</text>
</comment>
<comment type="subcellular location">
    <subcellularLocation>
        <location evidence="1">Cytoplasm</location>
    </subcellularLocation>
</comment>
<comment type="similarity">
    <text evidence="1">Belongs to the class-I aminoacyl-tRNA synthetase family.</text>
</comment>
<accession>Q1REN7</accession>
<keyword id="KW-0030">Aminoacyl-tRNA synthetase</keyword>
<keyword id="KW-0067">ATP-binding</keyword>
<keyword id="KW-0963">Cytoplasm</keyword>
<keyword id="KW-0436">Ligase</keyword>
<keyword id="KW-0547">Nucleotide-binding</keyword>
<keyword id="KW-0648">Protein biosynthesis</keyword>
<reference key="1">
    <citation type="journal article" date="2006" name="Proc. Natl. Acad. Sci. U.S.A.">
        <title>Identification of genes subject to positive selection in uropathogenic strains of Escherichia coli: a comparative genomics approach.</title>
        <authorList>
            <person name="Chen S.L."/>
            <person name="Hung C.-S."/>
            <person name="Xu J."/>
            <person name="Reigstad C.S."/>
            <person name="Magrini V."/>
            <person name="Sabo A."/>
            <person name="Blasiar D."/>
            <person name="Bieri T."/>
            <person name="Meyer R.R."/>
            <person name="Ozersky P."/>
            <person name="Armstrong J.R."/>
            <person name="Fulton R.S."/>
            <person name="Latreille J.P."/>
            <person name="Spieth J."/>
            <person name="Hooton T.M."/>
            <person name="Mardis E.R."/>
            <person name="Hultgren S.J."/>
            <person name="Gordon J.I."/>
        </authorList>
    </citation>
    <scope>NUCLEOTIDE SEQUENCE [LARGE SCALE GENOMIC DNA]</scope>
    <source>
        <strain>UTI89 / UPEC</strain>
    </source>
</reference>
<name>SYQ_ECOUT</name>
<evidence type="ECO:0000255" key="1">
    <source>
        <dbReference type="HAMAP-Rule" id="MF_00126"/>
    </source>
</evidence>
<proteinExistence type="inferred from homology"/>